<feature type="signal peptide" description="Tat-type signal" evidence="1">
    <location>
        <begin position="1"/>
        <end position="37"/>
    </location>
</feature>
<feature type="chain" id="PRO_0000418467" description="Copper chaperone GriE">
    <location>
        <begin position="38"/>
        <end position="129"/>
    </location>
</feature>
<feature type="region of interest" description="Disordered" evidence="2">
    <location>
        <begin position="32"/>
        <end position="51"/>
    </location>
</feature>
<feature type="compositionally biased region" description="Low complexity" evidence="2">
    <location>
        <begin position="34"/>
        <end position="45"/>
    </location>
</feature>
<accession>B1VTI4</accession>
<accession>Q4W5X2</accession>
<sequence length="129" mass="13427">MPMNRREMVMATTGAALAAAAAVPLLSGGEGEGAAEAAAAPAKATGRGREHTERYLGRSIRVAAPADGGGVFIDGRPLHIMKFADDAYLSSMCHYEMAPTPLHAARRAVEELRGAALQPSTHGTHVTHL</sequence>
<name>GRIE_STRGG</name>
<organism>
    <name type="scientific">Streptomyces griseus subsp. griseus (strain JCM 4626 / CBS 651.72 / NBRC 13350 / KCC S-0626 / ISP 5235)</name>
    <dbReference type="NCBI Taxonomy" id="455632"/>
    <lineage>
        <taxon>Bacteria</taxon>
        <taxon>Bacillati</taxon>
        <taxon>Actinomycetota</taxon>
        <taxon>Actinomycetes</taxon>
        <taxon>Kitasatosporales</taxon>
        <taxon>Streptomycetaceae</taxon>
        <taxon>Streptomyces</taxon>
    </lineage>
</organism>
<reference key="1">
    <citation type="journal article" date="2006" name="J. Biol. Chem.">
        <title>A novel o-aminophenol oxidase responsible for formation of the phenoxazinone chromophore of grixazone.</title>
        <authorList>
            <person name="Suzuki H."/>
            <person name="Furusho Y."/>
            <person name="Higashi T."/>
            <person name="Ohnishi Y."/>
            <person name="Horinouchi S."/>
        </authorList>
    </citation>
    <scope>NUCLEOTIDE SEQUENCE [GENOMIC DNA]</scope>
    <scope>FUNCTION</scope>
    <scope>DISRUPTION PHENOTYPE</scope>
    <source>
        <strain>JCM 4626 / CBS 651.72 / NBRC 13350 / KCC S-0626 / ISP 5235</strain>
    </source>
</reference>
<reference key="2">
    <citation type="journal article" date="2008" name="J. Bacteriol.">
        <title>Genome sequence of the streptomycin-producing microorganism Streptomyces griseus IFO 13350.</title>
        <authorList>
            <person name="Ohnishi Y."/>
            <person name="Ishikawa J."/>
            <person name="Hara H."/>
            <person name="Suzuki H."/>
            <person name="Ikenoya M."/>
            <person name="Ikeda H."/>
            <person name="Yamashita A."/>
            <person name="Hattori M."/>
            <person name="Horinouchi S."/>
        </authorList>
    </citation>
    <scope>NUCLEOTIDE SEQUENCE [LARGE SCALE GENOMIC DNA]</scope>
    <source>
        <strain>JCM 4626 / CBS 651.72 / NBRC 13350 / KCC S-0626 / ISP 5235</strain>
    </source>
</reference>
<proteinExistence type="inferred from homology"/>
<evidence type="ECO:0000255" key="1">
    <source>
        <dbReference type="PROSITE-ProRule" id="PRU00648"/>
    </source>
</evidence>
<evidence type="ECO:0000256" key="2">
    <source>
        <dbReference type="SAM" id="MobiDB-lite"/>
    </source>
</evidence>
<evidence type="ECO:0000269" key="3">
    <source>
    </source>
</evidence>
<evidence type="ECO:0000305" key="4"/>
<evidence type="ECO:0000305" key="5">
    <source>
    </source>
</evidence>
<comment type="function">
    <text evidence="5">Involved in the transfer of Cu(2+) ions to the apo form of o-aminophenol oxidase GriF in the grixazone biosynthetic pathway.</text>
</comment>
<comment type="PTM">
    <text>Predicted to be exported by the Tat system. The position of the signal peptide cleavage has not been experimentally proven.</text>
</comment>
<comment type="disruption phenotype">
    <text evidence="3">Cells lacking griE and griF show accumulation of the 3-amino-4-hydroxybenzaldehyde (3,4-AHBAL) intermediate.</text>
</comment>
<comment type="similarity">
    <text evidence="4">Belongs to the melC1 family.</text>
</comment>
<dbReference type="EMBL" id="AB214954">
    <property type="protein sequence ID" value="BAD99128.1"/>
    <property type="molecule type" value="Genomic_DNA"/>
</dbReference>
<dbReference type="EMBL" id="AB259663">
    <property type="protein sequence ID" value="BAF36647.1"/>
    <property type="molecule type" value="Genomic_DNA"/>
</dbReference>
<dbReference type="EMBL" id="AP009493">
    <property type="protein sequence ID" value="BAG21074.1"/>
    <property type="molecule type" value="Genomic_DNA"/>
</dbReference>
<dbReference type="SMR" id="B1VTI4"/>
<dbReference type="KEGG" id="sgr:SGR_4245"/>
<dbReference type="PATRIC" id="fig|455632.4.peg.4325"/>
<dbReference type="eggNOG" id="ENOG502ZWEF">
    <property type="taxonomic scope" value="Bacteria"/>
</dbReference>
<dbReference type="HOGENOM" id="CLU_130429_1_0_11"/>
<dbReference type="Proteomes" id="UP000001685">
    <property type="component" value="Chromosome"/>
</dbReference>
<dbReference type="GO" id="GO:0005507">
    <property type="term" value="F:copper ion binding"/>
    <property type="evidence" value="ECO:0000304"/>
    <property type="project" value="UniProtKB"/>
</dbReference>
<dbReference type="GO" id="GO:0042438">
    <property type="term" value="P:melanin biosynthetic process"/>
    <property type="evidence" value="ECO:0007669"/>
    <property type="project" value="InterPro"/>
</dbReference>
<dbReference type="FunFam" id="3.30.1880.10:FF:000001">
    <property type="match status" value="1"/>
</dbReference>
<dbReference type="Gene3D" id="3.30.1880.10">
    <property type="entry name" value="protein ne1242 domain like"/>
    <property type="match status" value="1"/>
</dbReference>
<dbReference type="InterPro" id="IPR023199">
    <property type="entry name" value="GriE/MELC1_sf"/>
</dbReference>
<dbReference type="InterPro" id="IPR010928">
    <property type="entry name" value="MelC1"/>
</dbReference>
<dbReference type="InterPro" id="IPR006311">
    <property type="entry name" value="TAT_signal"/>
</dbReference>
<dbReference type="Pfam" id="PF06236">
    <property type="entry name" value="MelC1"/>
    <property type="match status" value="1"/>
</dbReference>
<dbReference type="PROSITE" id="PS51318">
    <property type="entry name" value="TAT"/>
    <property type="match status" value="1"/>
</dbReference>
<keyword id="KW-0186">Copper</keyword>
<keyword id="KW-0732">Signal</keyword>
<gene>
    <name type="primary">griE</name>
    <name type="ordered locus">SGR_4245</name>
</gene>
<protein>
    <recommendedName>
        <fullName>Copper chaperone GriE</fullName>
    </recommendedName>
    <alternativeName>
        <fullName>Grixazone biosynthesis protein E</fullName>
    </alternativeName>
</protein>